<proteinExistence type="inferred from homology"/>
<gene>
    <name evidence="1" type="primary">proA</name>
    <name type="ordered locus">XCC2238</name>
</gene>
<keyword id="KW-0028">Amino-acid biosynthesis</keyword>
<keyword id="KW-0963">Cytoplasm</keyword>
<keyword id="KW-0521">NADP</keyword>
<keyword id="KW-0560">Oxidoreductase</keyword>
<keyword id="KW-0641">Proline biosynthesis</keyword>
<keyword id="KW-1185">Reference proteome</keyword>
<reference key="1">
    <citation type="journal article" date="2002" name="Nature">
        <title>Comparison of the genomes of two Xanthomonas pathogens with differing host specificities.</title>
        <authorList>
            <person name="da Silva A.C.R."/>
            <person name="Ferro J.A."/>
            <person name="Reinach F.C."/>
            <person name="Farah C.S."/>
            <person name="Furlan L.R."/>
            <person name="Quaggio R.B."/>
            <person name="Monteiro-Vitorello C.B."/>
            <person name="Van Sluys M.A."/>
            <person name="Almeida N.F. Jr."/>
            <person name="Alves L.M.C."/>
            <person name="do Amaral A.M."/>
            <person name="Bertolini M.C."/>
            <person name="Camargo L.E.A."/>
            <person name="Camarotte G."/>
            <person name="Cannavan F."/>
            <person name="Cardozo J."/>
            <person name="Chambergo F."/>
            <person name="Ciapina L.P."/>
            <person name="Cicarelli R.M.B."/>
            <person name="Coutinho L.L."/>
            <person name="Cursino-Santos J.R."/>
            <person name="El-Dorry H."/>
            <person name="Faria J.B."/>
            <person name="Ferreira A.J.S."/>
            <person name="Ferreira R.C.C."/>
            <person name="Ferro M.I.T."/>
            <person name="Formighieri E.F."/>
            <person name="Franco M.C."/>
            <person name="Greggio C.C."/>
            <person name="Gruber A."/>
            <person name="Katsuyama A.M."/>
            <person name="Kishi L.T."/>
            <person name="Leite R.P."/>
            <person name="Lemos E.G.M."/>
            <person name="Lemos M.V.F."/>
            <person name="Locali E.C."/>
            <person name="Machado M.A."/>
            <person name="Madeira A.M.B.N."/>
            <person name="Martinez-Rossi N.M."/>
            <person name="Martins E.C."/>
            <person name="Meidanis J."/>
            <person name="Menck C.F.M."/>
            <person name="Miyaki C.Y."/>
            <person name="Moon D.H."/>
            <person name="Moreira L.M."/>
            <person name="Novo M.T.M."/>
            <person name="Okura V.K."/>
            <person name="Oliveira M.C."/>
            <person name="Oliveira V.R."/>
            <person name="Pereira H.A."/>
            <person name="Rossi A."/>
            <person name="Sena J.A.D."/>
            <person name="Silva C."/>
            <person name="de Souza R.F."/>
            <person name="Spinola L.A.F."/>
            <person name="Takita M.A."/>
            <person name="Tamura R.E."/>
            <person name="Teixeira E.C."/>
            <person name="Tezza R.I.D."/>
            <person name="Trindade dos Santos M."/>
            <person name="Truffi D."/>
            <person name="Tsai S.M."/>
            <person name="White F.F."/>
            <person name="Setubal J.C."/>
            <person name="Kitajima J.P."/>
        </authorList>
    </citation>
    <scope>NUCLEOTIDE SEQUENCE [LARGE SCALE GENOMIC DNA]</scope>
    <source>
        <strain>ATCC 33913 / DSM 3586 / NCPPB 528 / LMG 568 / P 25</strain>
    </source>
</reference>
<name>PROA_XANCP</name>
<evidence type="ECO:0000255" key="1">
    <source>
        <dbReference type="HAMAP-Rule" id="MF_00412"/>
    </source>
</evidence>
<accession>Q8P8K3</accession>
<protein>
    <recommendedName>
        <fullName evidence="1">Gamma-glutamyl phosphate reductase</fullName>
        <shortName evidence="1">GPR</shortName>
        <ecNumber evidence="1">1.2.1.41</ecNumber>
    </recommendedName>
    <alternativeName>
        <fullName evidence="1">Glutamate-5-semialdehyde dehydrogenase</fullName>
    </alternativeName>
    <alternativeName>
        <fullName evidence="1">Glutamyl-gamma-semialdehyde dehydrogenase</fullName>
        <shortName evidence="1">GSA dehydrogenase</shortName>
    </alternativeName>
</protein>
<feature type="chain" id="PRO_0000189814" description="Gamma-glutamyl phosphate reductase">
    <location>
        <begin position="1"/>
        <end position="414"/>
    </location>
</feature>
<dbReference type="EC" id="1.2.1.41" evidence="1"/>
<dbReference type="EMBL" id="AE008922">
    <property type="protein sequence ID" value="AAM41517.1"/>
    <property type="molecule type" value="Genomic_DNA"/>
</dbReference>
<dbReference type="RefSeq" id="NP_637593.1">
    <property type="nucleotide sequence ID" value="NC_003902.1"/>
</dbReference>
<dbReference type="RefSeq" id="WP_011037382.1">
    <property type="nucleotide sequence ID" value="NC_003902.1"/>
</dbReference>
<dbReference type="SMR" id="Q8P8K3"/>
<dbReference type="STRING" id="190485.XCC2238"/>
<dbReference type="EnsemblBacteria" id="AAM41517">
    <property type="protein sequence ID" value="AAM41517"/>
    <property type="gene ID" value="XCC2238"/>
</dbReference>
<dbReference type="KEGG" id="xcc:XCC2238"/>
<dbReference type="PATRIC" id="fig|190485.4.peg.2388"/>
<dbReference type="eggNOG" id="COG0014">
    <property type="taxonomic scope" value="Bacteria"/>
</dbReference>
<dbReference type="HOGENOM" id="CLU_030231_0_0_6"/>
<dbReference type="OrthoDB" id="9809970at2"/>
<dbReference type="UniPathway" id="UPA00098">
    <property type="reaction ID" value="UER00360"/>
</dbReference>
<dbReference type="Proteomes" id="UP000001010">
    <property type="component" value="Chromosome"/>
</dbReference>
<dbReference type="GO" id="GO:0005737">
    <property type="term" value="C:cytoplasm"/>
    <property type="evidence" value="ECO:0007669"/>
    <property type="project" value="UniProtKB-SubCell"/>
</dbReference>
<dbReference type="GO" id="GO:0004350">
    <property type="term" value="F:glutamate-5-semialdehyde dehydrogenase activity"/>
    <property type="evidence" value="ECO:0000318"/>
    <property type="project" value="GO_Central"/>
</dbReference>
<dbReference type="GO" id="GO:0050661">
    <property type="term" value="F:NADP binding"/>
    <property type="evidence" value="ECO:0007669"/>
    <property type="project" value="InterPro"/>
</dbReference>
<dbReference type="GO" id="GO:0055129">
    <property type="term" value="P:L-proline biosynthetic process"/>
    <property type="evidence" value="ECO:0007669"/>
    <property type="project" value="UniProtKB-UniRule"/>
</dbReference>
<dbReference type="CDD" id="cd07079">
    <property type="entry name" value="ALDH_F18-19_ProA-GPR"/>
    <property type="match status" value="1"/>
</dbReference>
<dbReference type="FunFam" id="3.40.309.10:FF:000006">
    <property type="entry name" value="Gamma-glutamyl phosphate reductase"/>
    <property type="match status" value="1"/>
</dbReference>
<dbReference type="Gene3D" id="3.40.605.10">
    <property type="entry name" value="Aldehyde Dehydrogenase, Chain A, domain 1"/>
    <property type="match status" value="1"/>
</dbReference>
<dbReference type="Gene3D" id="3.40.309.10">
    <property type="entry name" value="Aldehyde Dehydrogenase, Chain A, domain 2"/>
    <property type="match status" value="1"/>
</dbReference>
<dbReference type="HAMAP" id="MF_00412">
    <property type="entry name" value="ProA"/>
    <property type="match status" value="1"/>
</dbReference>
<dbReference type="InterPro" id="IPR016161">
    <property type="entry name" value="Ald_DH/histidinol_DH"/>
</dbReference>
<dbReference type="InterPro" id="IPR016163">
    <property type="entry name" value="Ald_DH_C"/>
</dbReference>
<dbReference type="InterPro" id="IPR016162">
    <property type="entry name" value="Ald_DH_N"/>
</dbReference>
<dbReference type="InterPro" id="IPR015590">
    <property type="entry name" value="Aldehyde_DH_dom"/>
</dbReference>
<dbReference type="InterPro" id="IPR020593">
    <property type="entry name" value="G-glutamylP_reductase_CS"/>
</dbReference>
<dbReference type="InterPro" id="IPR012134">
    <property type="entry name" value="Glu-5-SA_DH"/>
</dbReference>
<dbReference type="InterPro" id="IPR000965">
    <property type="entry name" value="GPR_dom"/>
</dbReference>
<dbReference type="NCBIfam" id="NF001221">
    <property type="entry name" value="PRK00197.1"/>
    <property type="match status" value="1"/>
</dbReference>
<dbReference type="NCBIfam" id="TIGR00407">
    <property type="entry name" value="proA"/>
    <property type="match status" value="1"/>
</dbReference>
<dbReference type="PANTHER" id="PTHR11063:SF8">
    <property type="entry name" value="DELTA-1-PYRROLINE-5-CARBOXYLATE SYNTHASE"/>
    <property type="match status" value="1"/>
</dbReference>
<dbReference type="PANTHER" id="PTHR11063">
    <property type="entry name" value="GLUTAMATE SEMIALDEHYDE DEHYDROGENASE"/>
    <property type="match status" value="1"/>
</dbReference>
<dbReference type="Pfam" id="PF00171">
    <property type="entry name" value="Aldedh"/>
    <property type="match status" value="1"/>
</dbReference>
<dbReference type="PIRSF" id="PIRSF000151">
    <property type="entry name" value="GPR"/>
    <property type="match status" value="1"/>
</dbReference>
<dbReference type="SUPFAM" id="SSF53720">
    <property type="entry name" value="ALDH-like"/>
    <property type="match status" value="1"/>
</dbReference>
<dbReference type="PROSITE" id="PS01223">
    <property type="entry name" value="PROA"/>
    <property type="match status" value="1"/>
</dbReference>
<organism>
    <name type="scientific">Xanthomonas campestris pv. campestris (strain ATCC 33913 / DSM 3586 / NCPPB 528 / LMG 568 / P 25)</name>
    <dbReference type="NCBI Taxonomy" id="190485"/>
    <lineage>
        <taxon>Bacteria</taxon>
        <taxon>Pseudomonadati</taxon>
        <taxon>Pseudomonadota</taxon>
        <taxon>Gammaproteobacteria</taxon>
        <taxon>Lysobacterales</taxon>
        <taxon>Lysobacteraceae</taxon>
        <taxon>Xanthomonas</taxon>
    </lineage>
</organism>
<sequence length="414" mass="43914">MTIKSLALQCRDAAQVLSQLSADAKQALLLAMANALDTDATQILQANQRDVDAAREKGTGAAMLDRLTLTPARLSAVGAALREVAVLPDPVGQVTRDDVRPNGIRVQKVRVPLGVIAMIYEARPNVTADAAALCIKAGNGVILRGGSEAIHSNTAIARALQGALREANVPEAALTLVEDLRRETMLELLQLSDIVDLAIPRGGEGLIRFVAEHARVPVIKHYKGVCHLFVDASADVDLAVRLLVDGKASRPSACNSLETLLVHADIAERFLPAAAAALRARNVELRGDAATRAVLPEIAAASDDDYAAEFLDLILAIRVVPDLDTALAHIRQYGSDHTEVIATQTPANAETFVQSLRSAVVMVNASSRFSDGGELGLGAEIGISTTRLHSYGPMGLEALTVERFVVRGEGQVRH</sequence>
<comment type="function">
    <text evidence="1">Catalyzes the NADPH-dependent reduction of L-glutamate 5-phosphate into L-glutamate 5-semialdehyde and phosphate. The product spontaneously undergoes cyclization to form 1-pyrroline-5-carboxylate.</text>
</comment>
<comment type="catalytic activity">
    <reaction evidence="1">
        <text>L-glutamate 5-semialdehyde + phosphate + NADP(+) = L-glutamyl 5-phosphate + NADPH + H(+)</text>
        <dbReference type="Rhea" id="RHEA:19541"/>
        <dbReference type="ChEBI" id="CHEBI:15378"/>
        <dbReference type="ChEBI" id="CHEBI:43474"/>
        <dbReference type="ChEBI" id="CHEBI:57783"/>
        <dbReference type="ChEBI" id="CHEBI:58066"/>
        <dbReference type="ChEBI" id="CHEBI:58274"/>
        <dbReference type="ChEBI" id="CHEBI:58349"/>
        <dbReference type="EC" id="1.2.1.41"/>
    </reaction>
</comment>
<comment type="pathway">
    <text evidence="1">Amino-acid biosynthesis; L-proline biosynthesis; L-glutamate 5-semialdehyde from L-glutamate: step 2/2.</text>
</comment>
<comment type="subcellular location">
    <subcellularLocation>
        <location evidence="1">Cytoplasm</location>
    </subcellularLocation>
</comment>
<comment type="similarity">
    <text evidence="1">Belongs to the gamma-glutamyl phosphate reductase family.</text>
</comment>